<name>O1165_MOUSE</name>
<dbReference type="EMBL" id="AY073448">
    <property type="protein sequence ID" value="AAL61111.1"/>
    <property type="molecule type" value="Genomic_DNA"/>
</dbReference>
<dbReference type="EMBL" id="AY318366">
    <property type="protein sequence ID" value="AAP71579.1"/>
    <property type="molecule type" value="Genomic_DNA"/>
</dbReference>
<dbReference type="EMBL" id="KP290749">
    <property type="protein sequence ID" value="ALI87907.1"/>
    <property type="molecule type" value="Genomic_DNA"/>
</dbReference>
<dbReference type="SMR" id="Q8VFR8"/>
<dbReference type="GlyCosmos" id="Q8VFR8">
    <property type="glycosylation" value="1 site, No reported glycans"/>
</dbReference>
<dbReference type="GlyGen" id="Q8VFR8">
    <property type="glycosylation" value="1 site"/>
</dbReference>
<dbReference type="MGI" id="MGI:3030999">
    <property type="gene designation" value="Olfr1165-ps"/>
</dbReference>
<dbReference type="PRO" id="PR:Q8VFR8"/>
<dbReference type="Proteomes" id="UP000000589">
    <property type="component" value="Chromosome 2"/>
</dbReference>
<dbReference type="GO" id="GO:0005886">
    <property type="term" value="C:plasma membrane"/>
    <property type="evidence" value="ECO:0007669"/>
    <property type="project" value="UniProtKB-SubCell"/>
</dbReference>
<dbReference type="GO" id="GO:0004930">
    <property type="term" value="F:G protein-coupled receptor activity"/>
    <property type="evidence" value="ECO:0007669"/>
    <property type="project" value="UniProtKB-KW"/>
</dbReference>
<dbReference type="GO" id="GO:0004984">
    <property type="term" value="F:olfactory receptor activity"/>
    <property type="evidence" value="ECO:0007669"/>
    <property type="project" value="InterPro"/>
</dbReference>
<dbReference type="CDD" id="cd15410">
    <property type="entry name" value="7tmA_OR5D-like"/>
    <property type="match status" value="1"/>
</dbReference>
<dbReference type="FunFam" id="1.20.1070.10:FF:000003">
    <property type="entry name" value="Olfactory receptor"/>
    <property type="match status" value="1"/>
</dbReference>
<dbReference type="Gene3D" id="1.20.1070.10">
    <property type="entry name" value="Rhodopsin 7-helix transmembrane proteins"/>
    <property type="match status" value="1"/>
</dbReference>
<dbReference type="InterPro" id="IPR000276">
    <property type="entry name" value="GPCR_Rhodpsn"/>
</dbReference>
<dbReference type="InterPro" id="IPR017452">
    <property type="entry name" value="GPCR_Rhodpsn_7TM"/>
</dbReference>
<dbReference type="InterPro" id="IPR000725">
    <property type="entry name" value="Olfact_rcpt"/>
</dbReference>
<dbReference type="PANTHER" id="PTHR48018">
    <property type="entry name" value="OLFACTORY RECEPTOR"/>
    <property type="match status" value="1"/>
</dbReference>
<dbReference type="Pfam" id="PF13853">
    <property type="entry name" value="7tm_4"/>
    <property type="match status" value="1"/>
</dbReference>
<dbReference type="PRINTS" id="PR00237">
    <property type="entry name" value="GPCRRHODOPSN"/>
</dbReference>
<dbReference type="PRINTS" id="PR00245">
    <property type="entry name" value="OLFACTORYR"/>
</dbReference>
<dbReference type="SUPFAM" id="SSF81321">
    <property type="entry name" value="Family A G protein-coupled receptor-like"/>
    <property type="match status" value="1"/>
</dbReference>
<dbReference type="PROSITE" id="PS00237">
    <property type="entry name" value="G_PROTEIN_RECEP_F1_1"/>
    <property type="match status" value="1"/>
</dbReference>
<dbReference type="PROSITE" id="PS50262">
    <property type="entry name" value="G_PROTEIN_RECEP_F1_2"/>
    <property type="match status" value="1"/>
</dbReference>
<gene>
    <name evidence="6" type="primary">Olfr1165-ps</name>
    <name evidence="5" type="synonym">Olfr1165</name>
</gene>
<organism evidence="7">
    <name type="scientific">Mus musculus</name>
    <name type="common">Mouse</name>
    <dbReference type="NCBI Taxonomy" id="10090"/>
    <lineage>
        <taxon>Eukaryota</taxon>
        <taxon>Metazoa</taxon>
        <taxon>Chordata</taxon>
        <taxon>Craniata</taxon>
        <taxon>Vertebrata</taxon>
        <taxon>Euteleostomi</taxon>
        <taxon>Mammalia</taxon>
        <taxon>Eutheria</taxon>
        <taxon>Euarchontoglires</taxon>
        <taxon>Glires</taxon>
        <taxon>Rodentia</taxon>
        <taxon>Myomorpha</taxon>
        <taxon>Muroidea</taxon>
        <taxon>Muridae</taxon>
        <taxon>Murinae</taxon>
        <taxon>Mus</taxon>
        <taxon>Mus</taxon>
    </lineage>
</organism>
<comment type="function">
    <text evidence="4">Olfactory receptor.</text>
</comment>
<comment type="subcellular location">
    <subcellularLocation>
        <location evidence="4">Cell membrane</location>
        <topology evidence="1">Multi-pass membrane protein</topology>
    </subcellularLocation>
</comment>
<comment type="polymorphism">
    <text evidence="4">A single nucleotide deletion in the gene coding for this protein is responsible for functional diversity leading to a frameshift and a truncated protein, thus producing a pseudogene.</text>
</comment>
<comment type="similarity">
    <text evidence="2">Belongs to the G-protein coupled receptor 1 family.</text>
</comment>
<proteinExistence type="inferred from homology"/>
<feature type="chain" id="PRO_0000455979" description="Olfactory receptor 1165">
    <location>
        <begin position="1"/>
        <end position="316"/>
    </location>
</feature>
<feature type="topological domain" description="Extracellular" evidence="4">
    <location>
        <begin position="1"/>
        <end position="28"/>
    </location>
</feature>
<feature type="transmembrane region" description="Helical; Name=1" evidence="3">
    <location>
        <begin position="29"/>
        <end position="50"/>
    </location>
</feature>
<feature type="topological domain" description="Cytoplasmic" evidence="4">
    <location>
        <begin position="51"/>
        <end position="61"/>
    </location>
</feature>
<feature type="transmembrane region" description="Helical; Name=2" evidence="3">
    <location>
        <begin position="62"/>
        <end position="80"/>
    </location>
</feature>
<feature type="topological domain" description="Extracellular" evidence="4">
    <location>
        <begin position="81"/>
        <end position="99"/>
    </location>
</feature>
<feature type="transmembrane region" description="Helical; Name=3" evidence="3">
    <location>
        <begin position="100"/>
        <end position="122"/>
    </location>
</feature>
<feature type="topological domain" description="Cytoplasmic" evidence="4">
    <location>
        <begin position="123"/>
        <end position="141"/>
    </location>
</feature>
<feature type="transmembrane region" description="Helical; Name=4" evidence="3">
    <location>
        <begin position="142"/>
        <end position="166"/>
    </location>
</feature>
<feature type="topological domain" description="Extracellular" evidence="4">
    <location>
        <begin position="167"/>
        <end position="205"/>
    </location>
</feature>
<feature type="transmembrane region" description="Helical; Name=5" evidence="3">
    <location>
        <begin position="206"/>
        <end position="228"/>
    </location>
</feature>
<feature type="topological domain" description="Cytoplasmic" evidence="4">
    <location>
        <begin position="229"/>
        <end position="239"/>
    </location>
</feature>
<feature type="transmembrane region" description="Helical; Name=6" evidence="3">
    <location>
        <begin position="240"/>
        <end position="263"/>
    </location>
</feature>
<feature type="topological domain" description="Extracellular" evidence="4">
    <location>
        <begin position="264"/>
        <end position="268"/>
    </location>
</feature>
<feature type="transmembrane region" description="Helical; Name=7" evidence="3">
    <location>
        <begin position="269"/>
        <end position="291"/>
    </location>
</feature>
<feature type="topological domain" description="Cytoplasmic" evidence="4">
    <location>
        <begin position="292"/>
        <end position="316"/>
    </location>
</feature>
<feature type="glycosylation site" description="N-linked (GlcNAc...) asparagine" evidence="1">
    <location>
        <position position="7"/>
    </location>
</feature>
<feature type="disulfide bond" evidence="2">
    <location>
        <begin position="99"/>
        <end position="181"/>
    </location>
</feature>
<evidence type="ECO:0000255" key="1"/>
<evidence type="ECO:0000255" key="2">
    <source>
        <dbReference type="PROSITE-ProRule" id="PRU00521"/>
    </source>
</evidence>
<evidence type="ECO:0000255" key="3">
    <source>
        <dbReference type="RuleBase" id="RU363047"/>
    </source>
</evidence>
<evidence type="ECO:0000305" key="4"/>
<evidence type="ECO:0000312" key="5">
    <source>
        <dbReference type="EMBL" id="AAP71579.1"/>
    </source>
</evidence>
<evidence type="ECO:0000312" key="6">
    <source>
        <dbReference type="EMBL" id="ALI87907.1"/>
    </source>
</evidence>
<evidence type="ECO:0000312" key="7">
    <source>
        <dbReference type="Proteomes" id="UP000000589"/>
    </source>
</evidence>
<reference evidence="7" key="1">
    <citation type="submission" date="2005-07" db="EMBL/GenBank/DDBJ databases">
        <authorList>
            <person name="Mural R.J."/>
            <person name="Adams M.D."/>
            <person name="Myers E.W."/>
            <person name="Smith H.O."/>
            <person name="Venter J.C."/>
        </authorList>
    </citation>
    <scope>NUCLEOTIDE SEQUENCE [LARGE SCALE GENOMIC DNA]</scope>
</reference>
<reference evidence="5" key="2">
    <citation type="journal article" date="2003" name="Genome Biol.">
        <title>Odorant receptor expressed sequence tags demonstrate olfactory expression of over 400 genes, extensive alternate splicing and unequal expression levels.</title>
        <authorList>
            <person name="Young J.M."/>
            <person name="Shykind B.M."/>
            <person name="Lane R.P."/>
            <person name="Tonnes-Priddy L."/>
            <person name="Ross J.A."/>
            <person name="Walker M."/>
            <person name="Williams E.M."/>
            <person name="Trask B.J."/>
        </authorList>
    </citation>
    <scope>NUCLEOTIDE SEQUENCE [GENOMIC DNA]</scope>
</reference>
<reference evidence="6" key="3">
    <citation type="submission" date="2014-12" db="EMBL/GenBank/DDBJ databases">
        <title>Human Olfactory Receptor Responses to Odorants.</title>
        <authorList>
            <person name="Mainland J.D."/>
            <person name="Li Y.R."/>
            <person name="Zhou T."/>
            <person name="Liu W.L.L."/>
            <person name="Matsunami H."/>
        </authorList>
    </citation>
    <scope>NUCLEOTIDE SEQUENCE [GENOMIC DNA]</scope>
    <source>
        <strain evidence="6">C57BL/6J</strain>
    </source>
</reference>
<accession>Q8VFR8</accession>
<keyword id="KW-1003">Cell membrane</keyword>
<keyword id="KW-1015">Disulfide bond</keyword>
<keyword id="KW-0297">G-protein coupled receptor</keyword>
<keyword id="KW-0325">Glycoprotein</keyword>
<keyword id="KW-0472">Membrane</keyword>
<keyword id="KW-0552">Olfaction</keyword>
<keyword id="KW-0675">Receptor</keyword>
<keyword id="KW-1185">Reference proteome</keyword>
<keyword id="KW-0716">Sensory transduction</keyword>
<keyword id="KW-0807">Transducer</keyword>
<keyword id="KW-0812">Transmembrane</keyword>
<keyword id="KW-1133">Transmembrane helix</keyword>
<protein>
    <recommendedName>
        <fullName evidence="4">Olfactory receptor 1165</fullName>
    </recommendedName>
</protein>
<sequence>MMLDLGNESSVTMFILSGFSEYPHLHAPLFLLFFMIYTVTLIGNLGIIVVRKVNPKLHTPMYFFLSHLSFLDICYSSVFTPKLLEILIVEDRTISFKGCMTQFFLICAFVITEMFMLAVMAYDRFVAVCNPLLYTVSMSPKLCAFLVAGTYMWGVLCSLTITYSLLQLSYCGPNIINHFGCEYSAILSLSCSDPTFSQVVCLTISIFNETCSLLIILASYVFIVVTIIKMPSKGGLQKAFSTCSSHLTAISIFHGIILLLYCVPNSKNSWLVVKVATVLFTVMIPMLNPLIYSLRNKDVKGTVSRLMHLKLQAHST</sequence>